<keyword id="KW-0342">GTP-binding</keyword>
<keyword id="KW-0547">Nucleotide-binding</keyword>
<keyword id="KW-1185">Reference proteome</keyword>
<keyword id="KW-0677">Repeat</keyword>
<keyword id="KW-0690">Ribosome biogenesis</keyword>
<gene>
    <name evidence="1" type="primary">der</name>
    <name type="synonym">engA</name>
    <name type="ordered locus">Desal_1029</name>
</gene>
<feature type="chain" id="PRO_1000204032" description="GTPase Der">
    <location>
        <begin position="1"/>
        <end position="450"/>
    </location>
</feature>
<feature type="domain" description="EngA-type G 1">
    <location>
        <begin position="3"/>
        <end position="170"/>
    </location>
</feature>
<feature type="domain" description="EngA-type G 2">
    <location>
        <begin position="183"/>
        <end position="356"/>
    </location>
</feature>
<feature type="domain" description="KH-like" evidence="1">
    <location>
        <begin position="357"/>
        <end position="441"/>
    </location>
</feature>
<feature type="binding site" evidence="1">
    <location>
        <begin position="9"/>
        <end position="16"/>
    </location>
    <ligand>
        <name>GTP</name>
        <dbReference type="ChEBI" id="CHEBI:37565"/>
        <label>1</label>
    </ligand>
</feature>
<feature type="binding site" evidence="1">
    <location>
        <begin position="56"/>
        <end position="60"/>
    </location>
    <ligand>
        <name>GTP</name>
        <dbReference type="ChEBI" id="CHEBI:37565"/>
        <label>1</label>
    </ligand>
</feature>
<feature type="binding site" evidence="1">
    <location>
        <begin position="122"/>
        <end position="125"/>
    </location>
    <ligand>
        <name>GTP</name>
        <dbReference type="ChEBI" id="CHEBI:37565"/>
        <label>1</label>
    </ligand>
</feature>
<feature type="binding site" evidence="1">
    <location>
        <begin position="189"/>
        <end position="196"/>
    </location>
    <ligand>
        <name>GTP</name>
        <dbReference type="ChEBI" id="CHEBI:37565"/>
        <label>2</label>
    </ligand>
</feature>
<feature type="binding site" evidence="1">
    <location>
        <begin position="236"/>
        <end position="240"/>
    </location>
    <ligand>
        <name>GTP</name>
        <dbReference type="ChEBI" id="CHEBI:37565"/>
        <label>2</label>
    </ligand>
</feature>
<feature type="binding site" evidence="1">
    <location>
        <begin position="301"/>
        <end position="304"/>
    </location>
    <ligand>
        <name>GTP</name>
        <dbReference type="ChEBI" id="CHEBI:37565"/>
        <label>2</label>
    </ligand>
</feature>
<protein>
    <recommendedName>
        <fullName evidence="1">GTPase Der</fullName>
    </recommendedName>
    <alternativeName>
        <fullName evidence="1">GTP-binding protein EngA</fullName>
    </alternativeName>
</protein>
<reference key="1">
    <citation type="submission" date="2009-06" db="EMBL/GenBank/DDBJ databases">
        <title>Complete sequence of Desulfovibrio salexigens DSM 2638.</title>
        <authorList>
            <consortium name="US DOE Joint Genome Institute"/>
            <person name="Lucas S."/>
            <person name="Copeland A."/>
            <person name="Lapidus A."/>
            <person name="Glavina del Rio T."/>
            <person name="Tice H."/>
            <person name="Bruce D."/>
            <person name="Goodwin L."/>
            <person name="Pitluck S."/>
            <person name="Munk A.C."/>
            <person name="Brettin T."/>
            <person name="Detter J.C."/>
            <person name="Han C."/>
            <person name="Tapia R."/>
            <person name="Larimer F."/>
            <person name="Land M."/>
            <person name="Hauser L."/>
            <person name="Kyrpides N."/>
            <person name="Anderson I."/>
            <person name="Wall J.D."/>
            <person name="Arkin A.P."/>
            <person name="Dehal P."/>
            <person name="Chivian D."/>
            <person name="Giles B."/>
            <person name="Hazen T.C."/>
        </authorList>
    </citation>
    <scope>NUCLEOTIDE SEQUENCE [LARGE SCALE GENOMIC DNA]</scope>
    <source>
        <strain>ATCC 14822 / DSM 2638 / NCIMB 8403 / VKM B-1763</strain>
    </source>
</reference>
<evidence type="ECO:0000255" key="1">
    <source>
        <dbReference type="HAMAP-Rule" id="MF_00195"/>
    </source>
</evidence>
<name>DER_MARSD</name>
<dbReference type="EMBL" id="CP001649">
    <property type="protein sequence ID" value="ACS79094.1"/>
    <property type="molecule type" value="Genomic_DNA"/>
</dbReference>
<dbReference type="RefSeq" id="WP_015850913.1">
    <property type="nucleotide sequence ID" value="NC_012881.1"/>
</dbReference>
<dbReference type="SMR" id="C6C0G0"/>
<dbReference type="STRING" id="526222.Desal_1029"/>
<dbReference type="KEGG" id="dsa:Desal_1029"/>
<dbReference type="eggNOG" id="COG1160">
    <property type="taxonomic scope" value="Bacteria"/>
</dbReference>
<dbReference type="HOGENOM" id="CLU_016077_6_2_7"/>
<dbReference type="OrthoDB" id="9805918at2"/>
<dbReference type="Proteomes" id="UP000002601">
    <property type="component" value="Chromosome"/>
</dbReference>
<dbReference type="GO" id="GO:0016887">
    <property type="term" value="F:ATP hydrolysis activity"/>
    <property type="evidence" value="ECO:0007669"/>
    <property type="project" value="InterPro"/>
</dbReference>
<dbReference type="GO" id="GO:0005525">
    <property type="term" value="F:GTP binding"/>
    <property type="evidence" value="ECO:0007669"/>
    <property type="project" value="UniProtKB-UniRule"/>
</dbReference>
<dbReference type="GO" id="GO:0042254">
    <property type="term" value="P:ribosome biogenesis"/>
    <property type="evidence" value="ECO:0007669"/>
    <property type="project" value="UniProtKB-KW"/>
</dbReference>
<dbReference type="CDD" id="cd01894">
    <property type="entry name" value="EngA1"/>
    <property type="match status" value="1"/>
</dbReference>
<dbReference type="CDD" id="cd01895">
    <property type="entry name" value="EngA2"/>
    <property type="match status" value="1"/>
</dbReference>
<dbReference type="FunFam" id="3.30.300.20:FF:000004">
    <property type="entry name" value="GTPase Der"/>
    <property type="match status" value="1"/>
</dbReference>
<dbReference type="FunFam" id="3.40.50.300:FF:000494">
    <property type="entry name" value="tRNA modification GTPase MnmE"/>
    <property type="match status" value="1"/>
</dbReference>
<dbReference type="Gene3D" id="3.30.300.20">
    <property type="match status" value="1"/>
</dbReference>
<dbReference type="Gene3D" id="3.40.50.300">
    <property type="entry name" value="P-loop containing nucleotide triphosphate hydrolases"/>
    <property type="match status" value="2"/>
</dbReference>
<dbReference type="HAMAP" id="MF_00195">
    <property type="entry name" value="GTPase_Der"/>
    <property type="match status" value="1"/>
</dbReference>
<dbReference type="InterPro" id="IPR003593">
    <property type="entry name" value="AAA+_ATPase"/>
</dbReference>
<dbReference type="InterPro" id="IPR031166">
    <property type="entry name" value="G_ENGA"/>
</dbReference>
<dbReference type="InterPro" id="IPR006073">
    <property type="entry name" value="GTP-bd"/>
</dbReference>
<dbReference type="InterPro" id="IPR016484">
    <property type="entry name" value="GTPase_Der"/>
</dbReference>
<dbReference type="InterPro" id="IPR032859">
    <property type="entry name" value="KH_dom-like"/>
</dbReference>
<dbReference type="InterPro" id="IPR015946">
    <property type="entry name" value="KH_dom-like_a/b"/>
</dbReference>
<dbReference type="InterPro" id="IPR027417">
    <property type="entry name" value="P-loop_NTPase"/>
</dbReference>
<dbReference type="InterPro" id="IPR005225">
    <property type="entry name" value="Small_GTP-bd"/>
</dbReference>
<dbReference type="NCBIfam" id="TIGR03594">
    <property type="entry name" value="GTPase_EngA"/>
    <property type="match status" value="1"/>
</dbReference>
<dbReference type="NCBIfam" id="TIGR00231">
    <property type="entry name" value="small_GTP"/>
    <property type="match status" value="2"/>
</dbReference>
<dbReference type="PANTHER" id="PTHR43834">
    <property type="entry name" value="GTPASE DER"/>
    <property type="match status" value="1"/>
</dbReference>
<dbReference type="PANTHER" id="PTHR43834:SF6">
    <property type="entry name" value="GTPASE DER"/>
    <property type="match status" value="1"/>
</dbReference>
<dbReference type="Pfam" id="PF14714">
    <property type="entry name" value="KH_dom-like"/>
    <property type="match status" value="1"/>
</dbReference>
<dbReference type="Pfam" id="PF01926">
    <property type="entry name" value="MMR_HSR1"/>
    <property type="match status" value="2"/>
</dbReference>
<dbReference type="PIRSF" id="PIRSF006485">
    <property type="entry name" value="GTP-binding_EngA"/>
    <property type="match status" value="1"/>
</dbReference>
<dbReference type="PRINTS" id="PR00326">
    <property type="entry name" value="GTP1OBG"/>
</dbReference>
<dbReference type="SMART" id="SM00382">
    <property type="entry name" value="AAA"/>
    <property type="match status" value="2"/>
</dbReference>
<dbReference type="SUPFAM" id="SSF52540">
    <property type="entry name" value="P-loop containing nucleoside triphosphate hydrolases"/>
    <property type="match status" value="2"/>
</dbReference>
<dbReference type="PROSITE" id="PS51712">
    <property type="entry name" value="G_ENGA"/>
    <property type="match status" value="2"/>
</dbReference>
<sequence>MLPTIALIGRPNVGKSTLFNRLLRKKRAITHDMPGITRDRIYAEGNYNGVHYALIDTGGLVMESDNNSEEFQGDIFEQAREAIEEAQALILVVDGRTGITQLDEQVAAYIRQSNKPILLLVNKVDGSELEATATADFHALGFEMMAVSAEHGFNLLELREKVADMALATGIEYEEEDEEAKGLKIAMLGRPNAGKSSMVNALTGEERVIVSDVAGTTRDSVDVTFESGGKIYTFVDTAGVRRRTNITDTIERFSVVRALRSSTKADITVMVVDALAGITKQDKRLLEYLLREAVPFIIAVNKIDLVSKSERNLLREGFERALRMAHHVPVVYTSCISKSGLGGILPLASKLKAECSLRISTGQLNRIMKEIIEKHQPPVVKRRRAKFKYMTQADDEPPTFIFFINDEKLIKSSYHRFLENRLRKILNVKHAPLNIVFRSTFRAKEDIVHK</sequence>
<comment type="function">
    <text evidence="1">GTPase that plays an essential role in the late steps of ribosome biogenesis.</text>
</comment>
<comment type="subunit">
    <text evidence="1">Associates with the 50S ribosomal subunit.</text>
</comment>
<comment type="similarity">
    <text evidence="1">Belongs to the TRAFAC class TrmE-Era-EngA-EngB-Septin-like GTPase superfamily. EngA (Der) GTPase family.</text>
</comment>
<organism>
    <name type="scientific">Maridesulfovibrio salexigens (strain ATCC 14822 / DSM 2638 / NCIMB 8403 / VKM B-1763)</name>
    <name type="common">Desulfovibrio salexigens</name>
    <dbReference type="NCBI Taxonomy" id="526222"/>
    <lineage>
        <taxon>Bacteria</taxon>
        <taxon>Pseudomonadati</taxon>
        <taxon>Thermodesulfobacteriota</taxon>
        <taxon>Desulfovibrionia</taxon>
        <taxon>Desulfovibrionales</taxon>
        <taxon>Desulfovibrionaceae</taxon>
        <taxon>Maridesulfovibrio</taxon>
    </lineage>
</organism>
<accession>C6C0G0</accession>
<proteinExistence type="inferred from homology"/>